<name>CHRD1_BOVIN</name>
<keyword id="KW-0007">Acetylation</keyword>
<keyword id="KW-0143">Chaperone</keyword>
<keyword id="KW-0479">Metal-binding</keyword>
<keyword id="KW-0597">Phosphoprotein</keyword>
<keyword id="KW-1185">Reference proteome</keyword>
<keyword id="KW-0677">Repeat</keyword>
<keyword id="KW-0346">Stress response</keyword>
<keyword id="KW-0862">Zinc</keyword>
<gene>
    <name type="primary">CHORDC1</name>
</gene>
<sequence length="332" mass="37427">MALLCYNRGCGQRFDPETNSDDACTYHPGVPVFHDALKGWSCCKRRTTDFSDFLSIVGCTKGRHNSEKPPEPVKPEVKTTEKKELSELKPKFQEHIIQAPKPVEAIKRPSPDEPMTNLELKISASLKQALDKLKLSSGNEENKKEEDSDEIKIGTSCKNGGCSKTYQGPQSLEEVCVYHSGVPIFHEGMKYWSCCRRKTSDFNTFLAQEGCTTGKHMWTKKDAGKKVVPCRHDWHQTGGEVTISVYAKNSLPELSQVVANSTLLNVHIVFEGEKEFHQNVKLWGVIDVKRSYVTMTATKIEITMRKAEPMQWASLELPAAKTEEKQKEETTE</sequence>
<reference key="1">
    <citation type="submission" date="2006-02" db="EMBL/GenBank/DDBJ databases">
        <authorList>
            <consortium name="NIH - Mammalian Gene Collection (MGC) project"/>
        </authorList>
    </citation>
    <scope>NUCLEOTIDE SEQUENCE [LARGE SCALE MRNA]</scope>
    <source>
        <strain>Hereford</strain>
        <tissue>Hypothalamus</tissue>
    </source>
</reference>
<proteinExistence type="evidence at transcript level"/>
<evidence type="ECO:0000250" key="1"/>
<evidence type="ECO:0000250" key="2">
    <source>
        <dbReference type="UniProtKB" id="Q9UHD1"/>
    </source>
</evidence>
<evidence type="ECO:0000255" key="3">
    <source>
        <dbReference type="PROSITE-ProRule" id="PRU00547"/>
    </source>
</evidence>
<evidence type="ECO:0000255" key="4">
    <source>
        <dbReference type="PROSITE-ProRule" id="PRU00734"/>
    </source>
</evidence>
<evidence type="ECO:0000256" key="5">
    <source>
        <dbReference type="SAM" id="MobiDB-lite"/>
    </source>
</evidence>
<comment type="function">
    <text evidence="1 2">Regulates centrosome duplication, probably by inhibiting the kinase activity of ROCK2. Proposed to act as co-chaperone for HSP90. May play a role in the regulation of NOD1 via a HSP90 chaperone complex. In vitro, has intrinsic chaperone activity. This function may be achieved by inhibiting association of ROCK2 with NPM1. Plays a role in ensuring the localization of the tyrosine kinase receptor EGFR to the plasma membrane, and thus ensures the subsequent regulation of EGFR activity and EGF-induced actin cytoskeleton remodeling (By similarity). Involved in stress response. Prevents tumorigenesis (By similarity).</text>
</comment>
<comment type="subunit">
    <text evidence="1">Interacts with HSP90AA1, HSP90AB1, PPP5C, ROCK1 and ROCK2.</text>
</comment>
<protein>
    <recommendedName>
        <fullName>Cysteine and histidine-rich domain-containing protein 1</fullName>
    </recommendedName>
    <alternativeName>
        <fullName>CHORD domain-containing protein 1</fullName>
        <shortName>CHP-1</shortName>
    </alternativeName>
    <alternativeName>
        <fullName>Protein morgana</fullName>
    </alternativeName>
</protein>
<feature type="initiator methionine" description="Removed" evidence="2">
    <location>
        <position position="1"/>
    </location>
</feature>
<feature type="chain" id="PRO_0000317769" description="Cysteine and histidine-rich domain-containing protein 1">
    <location>
        <begin position="2"/>
        <end position="332"/>
    </location>
</feature>
<feature type="domain" description="CHORD 1" evidence="4">
    <location>
        <begin position="5"/>
        <end position="64"/>
    </location>
</feature>
<feature type="domain" description="CHORD 2" evidence="4">
    <location>
        <begin position="157"/>
        <end position="216"/>
    </location>
</feature>
<feature type="domain" description="CS" evidence="3">
    <location>
        <begin position="227"/>
        <end position="316"/>
    </location>
</feature>
<feature type="region of interest" description="Interaction with PPP5C" evidence="1">
    <location>
        <begin position="2"/>
        <end position="77"/>
    </location>
</feature>
<feature type="region of interest" description="Disordered" evidence="5">
    <location>
        <begin position="62"/>
        <end position="82"/>
    </location>
</feature>
<feature type="region of interest" description="Interaction with HSP90AA1 and HSP90AB1" evidence="1">
    <location>
        <begin position="65"/>
        <end position="316"/>
    </location>
</feature>
<feature type="compositionally biased region" description="Basic and acidic residues" evidence="5">
    <location>
        <begin position="64"/>
        <end position="82"/>
    </location>
</feature>
<feature type="binding site" evidence="4">
    <location>
        <position position="5"/>
    </location>
    <ligand>
        <name>Zn(2+)</name>
        <dbReference type="ChEBI" id="CHEBI:29105"/>
        <label>1</label>
    </ligand>
</feature>
<feature type="binding site" evidence="4">
    <location>
        <position position="10"/>
    </location>
    <ligand>
        <name>Zn(2+)</name>
        <dbReference type="ChEBI" id="CHEBI:29105"/>
        <label>1</label>
    </ligand>
</feature>
<feature type="binding site" evidence="4">
    <location>
        <position position="24"/>
    </location>
    <ligand>
        <name>Zn(2+)</name>
        <dbReference type="ChEBI" id="CHEBI:29105"/>
        <label>1</label>
    </ligand>
</feature>
<feature type="binding site" evidence="4">
    <location>
        <position position="27"/>
    </location>
    <ligand>
        <name>Zn(2+)</name>
        <dbReference type="ChEBI" id="CHEBI:29105"/>
        <label>2</label>
    </ligand>
</feature>
<feature type="binding site" evidence="4">
    <location>
        <position position="42"/>
    </location>
    <ligand>
        <name>Zn(2+)</name>
        <dbReference type="ChEBI" id="CHEBI:29105"/>
        <label>2</label>
    </ligand>
</feature>
<feature type="binding site" evidence="4">
    <location>
        <position position="43"/>
    </location>
    <ligand>
        <name>Zn(2+)</name>
        <dbReference type="ChEBI" id="CHEBI:29105"/>
        <label>2</label>
    </ligand>
</feature>
<feature type="binding site" evidence="4">
    <location>
        <position position="59"/>
    </location>
    <ligand>
        <name>Zn(2+)</name>
        <dbReference type="ChEBI" id="CHEBI:29105"/>
        <label>2</label>
    </ligand>
</feature>
<feature type="binding site" evidence="4">
    <location>
        <position position="64"/>
    </location>
    <ligand>
        <name>Zn(2+)</name>
        <dbReference type="ChEBI" id="CHEBI:29105"/>
        <label>1</label>
    </ligand>
</feature>
<feature type="binding site" evidence="4">
    <location>
        <position position="157"/>
    </location>
    <ligand>
        <name>Zn(2+)</name>
        <dbReference type="ChEBI" id="CHEBI:29105"/>
        <label>3</label>
    </ligand>
</feature>
<feature type="binding site" evidence="4">
    <location>
        <position position="162"/>
    </location>
    <ligand>
        <name>Zn(2+)</name>
        <dbReference type="ChEBI" id="CHEBI:29105"/>
        <label>3</label>
    </ligand>
</feature>
<feature type="binding site" evidence="4">
    <location>
        <position position="176"/>
    </location>
    <ligand>
        <name>Zn(2+)</name>
        <dbReference type="ChEBI" id="CHEBI:29105"/>
        <label>3</label>
    </ligand>
</feature>
<feature type="binding site" evidence="4">
    <location>
        <position position="179"/>
    </location>
    <ligand>
        <name>Zn(2+)</name>
        <dbReference type="ChEBI" id="CHEBI:29105"/>
        <label>4</label>
    </ligand>
</feature>
<feature type="binding site" evidence="4">
    <location>
        <position position="194"/>
    </location>
    <ligand>
        <name>Zn(2+)</name>
        <dbReference type="ChEBI" id="CHEBI:29105"/>
        <label>4</label>
    </ligand>
</feature>
<feature type="binding site" evidence="4">
    <location>
        <position position="195"/>
    </location>
    <ligand>
        <name>Zn(2+)</name>
        <dbReference type="ChEBI" id="CHEBI:29105"/>
        <label>4</label>
    </ligand>
</feature>
<feature type="binding site" evidence="4">
    <location>
        <position position="211"/>
    </location>
    <ligand>
        <name>Zn(2+)</name>
        <dbReference type="ChEBI" id="CHEBI:29105"/>
        <label>4</label>
    </ligand>
</feature>
<feature type="binding site" evidence="4">
    <location>
        <position position="216"/>
    </location>
    <ligand>
        <name>Zn(2+)</name>
        <dbReference type="ChEBI" id="CHEBI:29105"/>
        <label>3</label>
    </ligand>
</feature>
<feature type="modified residue" description="N-acetylalanine" evidence="2">
    <location>
        <position position="2"/>
    </location>
</feature>
<feature type="modified residue" description="Phosphothreonine" evidence="2">
    <location>
        <position position="47"/>
    </location>
</feature>
<feature type="modified residue" description="Phosphoserine" evidence="2">
    <location>
        <position position="51"/>
    </location>
</feature>
<accession>Q29RL2</accession>
<organism>
    <name type="scientific">Bos taurus</name>
    <name type="common">Bovine</name>
    <dbReference type="NCBI Taxonomy" id="9913"/>
    <lineage>
        <taxon>Eukaryota</taxon>
        <taxon>Metazoa</taxon>
        <taxon>Chordata</taxon>
        <taxon>Craniata</taxon>
        <taxon>Vertebrata</taxon>
        <taxon>Euteleostomi</taxon>
        <taxon>Mammalia</taxon>
        <taxon>Eutheria</taxon>
        <taxon>Laurasiatheria</taxon>
        <taxon>Artiodactyla</taxon>
        <taxon>Ruminantia</taxon>
        <taxon>Pecora</taxon>
        <taxon>Bovidae</taxon>
        <taxon>Bovinae</taxon>
        <taxon>Bos</taxon>
    </lineage>
</organism>
<dbReference type="EMBL" id="BC114125">
    <property type="protein sequence ID" value="AAI14126.1"/>
    <property type="molecule type" value="mRNA"/>
</dbReference>
<dbReference type="RefSeq" id="NP_001039377.1">
    <property type="nucleotide sequence ID" value="NM_001045912.2"/>
</dbReference>
<dbReference type="SMR" id="Q29RL2"/>
<dbReference type="FunCoup" id="Q29RL2">
    <property type="interactions" value="3948"/>
</dbReference>
<dbReference type="STRING" id="9913.ENSBTAP00000018100"/>
<dbReference type="SwissPalm" id="Q29RL2"/>
<dbReference type="PaxDb" id="9913-ENSBTAP00000018100"/>
<dbReference type="Ensembl" id="ENSBTAT00000018100.7">
    <property type="protein sequence ID" value="ENSBTAP00000018100.5"/>
    <property type="gene ID" value="ENSBTAG00000013615.7"/>
</dbReference>
<dbReference type="GeneID" id="505144"/>
<dbReference type="KEGG" id="bta:505144"/>
<dbReference type="CTD" id="26973"/>
<dbReference type="VEuPathDB" id="HostDB:ENSBTAG00000013615"/>
<dbReference type="VGNC" id="VGNC:27309">
    <property type="gene designation" value="CHORDC1"/>
</dbReference>
<dbReference type="eggNOG" id="KOG1667">
    <property type="taxonomic scope" value="Eukaryota"/>
</dbReference>
<dbReference type="GeneTree" id="ENSGT00940000154174"/>
<dbReference type="HOGENOM" id="CLU_040079_0_0_1"/>
<dbReference type="InParanoid" id="Q29RL2"/>
<dbReference type="OMA" id="KGYTCCK"/>
<dbReference type="OrthoDB" id="10261079at2759"/>
<dbReference type="TreeFam" id="TF105394"/>
<dbReference type="Proteomes" id="UP000009136">
    <property type="component" value="Chromosome 29"/>
</dbReference>
<dbReference type="Bgee" id="ENSBTAG00000013615">
    <property type="expression patterns" value="Expressed in retropharyngeal lymph node and 108 other cell types or tissues"/>
</dbReference>
<dbReference type="GO" id="GO:0043531">
    <property type="term" value="F:ADP binding"/>
    <property type="evidence" value="ECO:0007669"/>
    <property type="project" value="Ensembl"/>
</dbReference>
<dbReference type="GO" id="GO:0005524">
    <property type="term" value="F:ATP binding"/>
    <property type="evidence" value="ECO:0007669"/>
    <property type="project" value="Ensembl"/>
</dbReference>
<dbReference type="GO" id="GO:0051879">
    <property type="term" value="F:Hsp90 protein binding"/>
    <property type="evidence" value="ECO:0007669"/>
    <property type="project" value="Ensembl"/>
</dbReference>
<dbReference type="GO" id="GO:0008270">
    <property type="term" value="F:zinc ion binding"/>
    <property type="evidence" value="ECO:0000318"/>
    <property type="project" value="GO_Central"/>
</dbReference>
<dbReference type="GO" id="GO:0051298">
    <property type="term" value="P:centrosome duplication"/>
    <property type="evidence" value="ECO:0000318"/>
    <property type="project" value="GO_Central"/>
</dbReference>
<dbReference type="GO" id="GO:0061077">
    <property type="term" value="P:chaperone-mediated protein folding"/>
    <property type="evidence" value="ECO:0000250"/>
    <property type="project" value="UniProtKB"/>
</dbReference>
<dbReference type="GO" id="GO:1900034">
    <property type="term" value="P:regulation of cellular response to heat"/>
    <property type="evidence" value="ECO:0000250"/>
    <property type="project" value="UniProtKB"/>
</dbReference>
<dbReference type="GO" id="GO:0010824">
    <property type="term" value="P:regulation of centrosome duplication"/>
    <property type="evidence" value="ECO:0000250"/>
    <property type="project" value="UniProtKB"/>
</dbReference>
<dbReference type="CDD" id="cd06488">
    <property type="entry name" value="p23_melusin_like"/>
    <property type="match status" value="1"/>
</dbReference>
<dbReference type="FunFam" id="2.60.40.790:FF:000017">
    <property type="entry name" value="Cysteine and histidine-rich domain-containing protein 1"/>
    <property type="match status" value="1"/>
</dbReference>
<dbReference type="FunFam" id="4.10.1130.20:FF:000001">
    <property type="entry name" value="Cysteine and histidine-rich domain-containing protein 1"/>
    <property type="match status" value="1"/>
</dbReference>
<dbReference type="FunFam" id="4.10.1130.20:FF:000002">
    <property type="entry name" value="cysteine and histidine-rich domain-containing protein 1"/>
    <property type="match status" value="1"/>
</dbReference>
<dbReference type="Gene3D" id="2.60.40.790">
    <property type="match status" value="1"/>
</dbReference>
<dbReference type="Gene3D" id="4.10.1130.20">
    <property type="match status" value="2"/>
</dbReference>
<dbReference type="InterPro" id="IPR007051">
    <property type="entry name" value="CHORD_dom"/>
</dbReference>
<dbReference type="InterPro" id="IPR039790">
    <property type="entry name" value="CHRD1"/>
</dbReference>
<dbReference type="InterPro" id="IPR007052">
    <property type="entry name" value="CS_dom"/>
</dbReference>
<dbReference type="InterPro" id="IPR008978">
    <property type="entry name" value="HSP20-like_chaperone"/>
</dbReference>
<dbReference type="PANTHER" id="PTHR46983">
    <property type="entry name" value="CYSTEINE AND HISTIDINE-RICH DOMAIN-CONTAINING PROTEIN 1"/>
    <property type="match status" value="1"/>
</dbReference>
<dbReference type="PANTHER" id="PTHR46983:SF4">
    <property type="entry name" value="CYSTEINE AND HISTIDINE-RICH DOMAIN-CONTAINING PROTEIN 1"/>
    <property type="match status" value="1"/>
</dbReference>
<dbReference type="Pfam" id="PF04968">
    <property type="entry name" value="CHORD"/>
    <property type="match status" value="2"/>
</dbReference>
<dbReference type="Pfam" id="PF04969">
    <property type="entry name" value="CS"/>
    <property type="match status" value="1"/>
</dbReference>
<dbReference type="SUPFAM" id="SSF49764">
    <property type="entry name" value="HSP20-like chaperones"/>
    <property type="match status" value="1"/>
</dbReference>
<dbReference type="PROSITE" id="PS51401">
    <property type="entry name" value="CHORD"/>
    <property type="match status" value="2"/>
</dbReference>
<dbReference type="PROSITE" id="PS51203">
    <property type="entry name" value="CS"/>
    <property type="match status" value="1"/>
</dbReference>